<comment type="function">
    <text>Participates in various redox reactions through the reversible oxidation of its active center dithiol to a disulfide and catalyzes dithiol-disulfide exchange reactions.</text>
</comment>
<comment type="similarity">
    <text evidence="3">Belongs to the thioredoxin family.</text>
</comment>
<protein>
    <recommendedName>
        <fullName>Thioredoxin 2</fullName>
        <shortName>Trx-2</shortName>
    </recommendedName>
</protein>
<keyword id="KW-1015">Disulfide bond</keyword>
<keyword id="KW-0249">Electron transport</keyword>
<keyword id="KW-0676">Redox-active center</keyword>
<keyword id="KW-1185">Reference proteome</keyword>
<keyword id="KW-0813">Transport</keyword>
<sequence length="109" mass="11859">MSGKYFEATDQNFQAEILNSDKVALVDFWAAWCGPCMMLGPVIEELAGDYEGKAIIAKLNVDENPNTAGQYGIRSIPTMLIIKGGKVVDQMVGALPKNMIAKKLDEHIG</sequence>
<dbReference type="EMBL" id="AE006470">
    <property type="protein sequence ID" value="AAM72077.1"/>
    <property type="molecule type" value="Genomic_DNA"/>
</dbReference>
<dbReference type="RefSeq" id="NP_661735.1">
    <property type="nucleotide sequence ID" value="NC_002932.3"/>
</dbReference>
<dbReference type="RefSeq" id="WP_010932522.1">
    <property type="nucleotide sequence ID" value="NC_002932.3"/>
</dbReference>
<dbReference type="SMR" id="Q8KE49"/>
<dbReference type="STRING" id="194439.CT0841"/>
<dbReference type="EnsemblBacteria" id="AAM72077">
    <property type="protein sequence ID" value="AAM72077"/>
    <property type="gene ID" value="CT0841"/>
</dbReference>
<dbReference type="KEGG" id="cte:CT0841"/>
<dbReference type="PATRIC" id="fig|194439.7.peg.765"/>
<dbReference type="eggNOG" id="COG3118">
    <property type="taxonomic scope" value="Bacteria"/>
</dbReference>
<dbReference type="HOGENOM" id="CLU_090389_10_2_10"/>
<dbReference type="OrthoDB" id="9790390at2"/>
<dbReference type="Proteomes" id="UP000001007">
    <property type="component" value="Chromosome"/>
</dbReference>
<dbReference type="GO" id="GO:0005829">
    <property type="term" value="C:cytosol"/>
    <property type="evidence" value="ECO:0007669"/>
    <property type="project" value="TreeGrafter"/>
</dbReference>
<dbReference type="GO" id="GO:0015035">
    <property type="term" value="F:protein-disulfide reductase activity"/>
    <property type="evidence" value="ECO:0007669"/>
    <property type="project" value="InterPro"/>
</dbReference>
<dbReference type="GO" id="GO:0045454">
    <property type="term" value="P:cell redox homeostasis"/>
    <property type="evidence" value="ECO:0007669"/>
    <property type="project" value="TreeGrafter"/>
</dbReference>
<dbReference type="CDD" id="cd02947">
    <property type="entry name" value="TRX_family"/>
    <property type="match status" value="1"/>
</dbReference>
<dbReference type="FunFam" id="3.40.30.10:FF:000001">
    <property type="entry name" value="Thioredoxin"/>
    <property type="match status" value="1"/>
</dbReference>
<dbReference type="Gene3D" id="3.40.30.10">
    <property type="entry name" value="Glutaredoxin"/>
    <property type="match status" value="1"/>
</dbReference>
<dbReference type="InterPro" id="IPR005746">
    <property type="entry name" value="Thioredoxin"/>
</dbReference>
<dbReference type="InterPro" id="IPR036249">
    <property type="entry name" value="Thioredoxin-like_sf"/>
</dbReference>
<dbReference type="InterPro" id="IPR017937">
    <property type="entry name" value="Thioredoxin_CS"/>
</dbReference>
<dbReference type="InterPro" id="IPR013766">
    <property type="entry name" value="Thioredoxin_domain"/>
</dbReference>
<dbReference type="NCBIfam" id="TIGR01068">
    <property type="entry name" value="thioredoxin"/>
    <property type="match status" value="1"/>
</dbReference>
<dbReference type="PANTHER" id="PTHR45663">
    <property type="entry name" value="GEO12009P1"/>
    <property type="match status" value="1"/>
</dbReference>
<dbReference type="PANTHER" id="PTHR45663:SF11">
    <property type="entry name" value="GEO12009P1"/>
    <property type="match status" value="1"/>
</dbReference>
<dbReference type="Pfam" id="PF00085">
    <property type="entry name" value="Thioredoxin"/>
    <property type="match status" value="1"/>
</dbReference>
<dbReference type="PIRSF" id="PIRSF000077">
    <property type="entry name" value="Thioredoxin"/>
    <property type="match status" value="1"/>
</dbReference>
<dbReference type="PRINTS" id="PR00421">
    <property type="entry name" value="THIOREDOXIN"/>
</dbReference>
<dbReference type="SUPFAM" id="SSF52833">
    <property type="entry name" value="Thioredoxin-like"/>
    <property type="match status" value="1"/>
</dbReference>
<dbReference type="PROSITE" id="PS00194">
    <property type="entry name" value="THIOREDOXIN_1"/>
    <property type="match status" value="1"/>
</dbReference>
<dbReference type="PROSITE" id="PS51352">
    <property type="entry name" value="THIOREDOXIN_2"/>
    <property type="match status" value="1"/>
</dbReference>
<proteinExistence type="inferred from homology"/>
<reference key="1">
    <citation type="journal article" date="2002" name="Proc. Natl. Acad. Sci. U.S.A.">
        <title>The complete genome sequence of Chlorobium tepidum TLS, a photosynthetic, anaerobic, green-sulfur bacterium.</title>
        <authorList>
            <person name="Eisen J.A."/>
            <person name="Nelson K.E."/>
            <person name="Paulsen I.T."/>
            <person name="Heidelberg J.F."/>
            <person name="Wu M."/>
            <person name="Dodson R.J."/>
            <person name="DeBoy R.T."/>
            <person name="Gwinn M.L."/>
            <person name="Nelson W.C."/>
            <person name="Haft D.H."/>
            <person name="Hickey E.K."/>
            <person name="Peterson J.D."/>
            <person name="Durkin A.S."/>
            <person name="Kolonay J.F."/>
            <person name="Yang F."/>
            <person name="Holt I.E."/>
            <person name="Umayam L.A."/>
            <person name="Mason T.M."/>
            <person name="Brenner M."/>
            <person name="Shea T.P."/>
            <person name="Parksey D.S."/>
            <person name="Nierman W.C."/>
            <person name="Feldblyum T.V."/>
            <person name="Hansen C.L."/>
            <person name="Craven M.B."/>
            <person name="Radune D."/>
            <person name="Vamathevan J.J."/>
            <person name="Khouri H.M."/>
            <person name="White O."/>
            <person name="Gruber T.M."/>
            <person name="Ketchum K.A."/>
            <person name="Venter J.C."/>
            <person name="Tettelin H."/>
            <person name="Bryant D.A."/>
            <person name="Fraser C.M."/>
        </authorList>
    </citation>
    <scope>NUCLEOTIDE SEQUENCE [LARGE SCALE GENOMIC DNA]</scope>
    <source>
        <strain>ATCC 49652 / DSM 12025 / NBRC 103806 / TLS</strain>
    </source>
</reference>
<evidence type="ECO:0000250" key="1"/>
<evidence type="ECO:0000255" key="2">
    <source>
        <dbReference type="PROSITE-ProRule" id="PRU00691"/>
    </source>
</evidence>
<evidence type="ECO:0000305" key="3"/>
<accession>Q8KE49</accession>
<name>THIO2_CHLTE</name>
<feature type="initiator methionine" description="Removed" evidence="1">
    <location>
        <position position="1"/>
    </location>
</feature>
<feature type="chain" id="PRO_0000120089" description="Thioredoxin 2">
    <location>
        <begin position="2"/>
        <end position="109"/>
    </location>
</feature>
<feature type="domain" description="Thioredoxin" evidence="2">
    <location>
        <begin position="2"/>
        <end position="109"/>
    </location>
</feature>
<feature type="disulfide bond" description="Redox-active" evidence="2">
    <location>
        <begin position="33"/>
        <end position="36"/>
    </location>
</feature>
<organism>
    <name type="scientific">Chlorobaculum tepidum (strain ATCC 49652 / DSM 12025 / NBRC 103806 / TLS)</name>
    <name type="common">Chlorobium tepidum</name>
    <dbReference type="NCBI Taxonomy" id="194439"/>
    <lineage>
        <taxon>Bacteria</taxon>
        <taxon>Pseudomonadati</taxon>
        <taxon>Chlorobiota</taxon>
        <taxon>Chlorobiia</taxon>
        <taxon>Chlorobiales</taxon>
        <taxon>Chlorobiaceae</taxon>
        <taxon>Chlorobaculum</taxon>
    </lineage>
</organism>
<gene>
    <name type="primary">trx2</name>
    <name type="ordered locus">CT0841</name>
</gene>